<proteinExistence type="inferred from homology"/>
<sequence length="137" mass="15045">MVFCVDTSAWHHAARPEVARRWLAALSADQIGICDHVRLEILYSANSATDYDALADELDGLARIPVGAETFTRACQVQRELAHVAGLHHRSVKIADLVIAAAAELSGTIVWHYDENYDRVAAITGQPTEWIVPRGTL</sequence>
<name>VPC18_MYCTU</name>
<feature type="chain" id="PRO_0000407877" description="Ribonuclease VapC18">
    <location>
        <begin position="1"/>
        <end position="137"/>
    </location>
</feature>
<feature type="domain" description="PINc" evidence="1">
    <location>
        <begin position="4"/>
        <end position="126"/>
    </location>
</feature>
<feature type="binding site" evidence="1">
    <location>
        <position position="6"/>
    </location>
    <ligand>
        <name>Mg(2+)</name>
        <dbReference type="ChEBI" id="CHEBI:18420"/>
    </ligand>
</feature>
<feature type="binding site" evidence="1">
    <location>
        <position position="96"/>
    </location>
    <ligand>
        <name>Mg(2+)</name>
        <dbReference type="ChEBI" id="CHEBI:18420"/>
    </ligand>
</feature>
<gene>
    <name evidence="1" type="primary">vapC18</name>
    <name type="ordered locus">Rv2546</name>
</gene>
<keyword id="KW-0378">Hydrolase</keyword>
<keyword id="KW-0460">Magnesium</keyword>
<keyword id="KW-0479">Metal-binding</keyword>
<keyword id="KW-0540">Nuclease</keyword>
<keyword id="KW-1185">Reference proteome</keyword>
<keyword id="KW-1277">Toxin-antitoxin system</keyword>
<protein>
    <recommendedName>
        <fullName evidence="1">Ribonuclease VapC18</fullName>
        <shortName evidence="1">RNase VapC18</shortName>
        <ecNumber evidence="1">3.1.-.-</ecNumber>
    </recommendedName>
    <alternativeName>
        <fullName evidence="1">Toxin VapC18</fullName>
    </alternativeName>
</protein>
<organism>
    <name type="scientific">Mycobacterium tuberculosis (strain ATCC 25618 / H37Rv)</name>
    <dbReference type="NCBI Taxonomy" id="83332"/>
    <lineage>
        <taxon>Bacteria</taxon>
        <taxon>Bacillati</taxon>
        <taxon>Actinomycetota</taxon>
        <taxon>Actinomycetes</taxon>
        <taxon>Mycobacteriales</taxon>
        <taxon>Mycobacteriaceae</taxon>
        <taxon>Mycobacterium</taxon>
        <taxon>Mycobacterium tuberculosis complex</taxon>
    </lineage>
</organism>
<comment type="function">
    <text evidence="1">Toxic component of a type II toxin-antitoxin (TA) system. An RNase. The cognate antitoxin is VapB18 (By similarity).</text>
</comment>
<comment type="cofactor">
    <cofactor evidence="1">
        <name>Mg(2+)</name>
        <dbReference type="ChEBI" id="CHEBI:18420"/>
    </cofactor>
</comment>
<comment type="similarity">
    <text evidence="1">Belongs to the PINc/VapC protein family.</text>
</comment>
<reference key="1">
    <citation type="journal article" date="1998" name="Nature">
        <title>Deciphering the biology of Mycobacterium tuberculosis from the complete genome sequence.</title>
        <authorList>
            <person name="Cole S.T."/>
            <person name="Brosch R."/>
            <person name="Parkhill J."/>
            <person name="Garnier T."/>
            <person name="Churcher C.M."/>
            <person name="Harris D.E."/>
            <person name="Gordon S.V."/>
            <person name="Eiglmeier K."/>
            <person name="Gas S."/>
            <person name="Barry C.E. III"/>
            <person name="Tekaia F."/>
            <person name="Badcock K."/>
            <person name="Basham D."/>
            <person name="Brown D."/>
            <person name="Chillingworth T."/>
            <person name="Connor R."/>
            <person name="Davies R.M."/>
            <person name="Devlin K."/>
            <person name="Feltwell T."/>
            <person name="Gentles S."/>
            <person name="Hamlin N."/>
            <person name="Holroyd S."/>
            <person name="Hornsby T."/>
            <person name="Jagels K."/>
            <person name="Krogh A."/>
            <person name="McLean J."/>
            <person name="Moule S."/>
            <person name="Murphy L.D."/>
            <person name="Oliver S."/>
            <person name="Osborne J."/>
            <person name="Quail M.A."/>
            <person name="Rajandream M.A."/>
            <person name="Rogers J."/>
            <person name="Rutter S."/>
            <person name="Seeger K."/>
            <person name="Skelton S."/>
            <person name="Squares S."/>
            <person name="Squares R."/>
            <person name="Sulston J.E."/>
            <person name="Taylor K."/>
            <person name="Whitehead S."/>
            <person name="Barrell B.G."/>
        </authorList>
    </citation>
    <scope>NUCLEOTIDE SEQUENCE [LARGE SCALE GENOMIC DNA]</scope>
    <source>
        <strain>ATCC 25618 / H37Rv</strain>
    </source>
</reference>
<reference key="2">
    <citation type="journal article" date="2005" name="Nucleic Acids Res.">
        <title>Toxin-antitoxin loci are highly abundant in free-living but lost from host-associated prokaryotes.</title>
        <authorList>
            <person name="Pandey D.P."/>
            <person name="Gerdes K."/>
        </authorList>
    </citation>
    <scope>POSSIBLE FUNCTION</scope>
    <source>
        <strain>ATCC 25618 / H37Rv</strain>
    </source>
</reference>
<evidence type="ECO:0000255" key="1">
    <source>
        <dbReference type="HAMAP-Rule" id="MF_00265"/>
    </source>
</evidence>
<dbReference type="EC" id="3.1.-.-" evidence="1"/>
<dbReference type="EMBL" id="AL123456">
    <property type="protein sequence ID" value="CCP45341.1"/>
    <property type="molecule type" value="Genomic_DNA"/>
</dbReference>
<dbReference type="PIR" id="F70659">
    <property type="entry name" value="F70659"/>
</dbReference>
<dbReference type="RefSeq" id="NP_217062.1">
    <property type="nucleotide sequence ID" value="NC_000962.3"/>
</dbReference>
<dbReference type="RefSeq" id="WP_003413164.1">
    <property type="nucleotide sequence ID" value="NZ_NVQJ01000032.1"/>
</dbReference>
<dbReference type="SMR" id="P95007"/>
<dbReference type="STRING" id="83332.Rv2546"/>
<dbReference type="PaxDb" id="83332-Rv2546"/>
<dbReference type="GeneID" id="887365"/>
<dbReference type="KEGG" id="mtu:Rv2546"/>
<dbReference type="KEGG" id="mtv:RVBD_2546"/>
<dbReference type="TubercuList" id="Rv2546"/>
<dbReference type="eggNOG" id="COG1487">
    <property type="taxonomic scope" value="Bacteria"/>
</dbReference>
<dbReference type="InParanoid" id="P95007"/>
<dbReference type="OrthoDB" id="5185254at2"/>
<dbReference type="PhylomeDB" id="P95007"/>
<dbReference type="Proteomes" id="UP000001584">
    <property type="component" value="Chromosome"/>
</dbReference>
<dbReference type="GO" id="GO:0000287">
    <property type="term" value="F:magnesium ion binding"/>
    <property type="evidence" value="ECO:0007669"/>
    <property type="project" value="UniProtKB-UniRule"/>
</dbReference>
<dbReference type="GO" id="GO:0004521">
    <property type="term" value="F:RNA endonuclease activity"/>
    <property type="evidence" value="ECO:0000318"/>
    <property type="project" value="GO_Central"/>
</dbReference>
<dbReference type="CDD" id="cd18755">
    <property type="entry name" value="PIN_MtVapC3_VapC21-like"/>
    <property type="match status" value="1"/>
</dbReference>
<dbReference type="Gene3D" id="3.40.50.1010">
    <property type="entry name" value="5'-nuclease"/>
    <property type="match status" value="1"/>
</dbReference>
<dbReference type="HAMAP" id="MF_00265">
    <property type="entry name" value="VapC_Nob1"/>
    <property type="match status" value="1"/>
</dbReference>
<dbReference type="InterPro" id="IPR029060">
    <property type="entry name" value="PIN-like_dom_sf"/>
</dbReference>
<dbReference type="InterPro" id="IPR002716">
    <property type="entry name" value="PIN_dom"/>
</dbReference>
<dbReference type="InterPro" id="IPR050556">
    <property type="entry name" value="Type_II_TA_system_RNase"/>
</dbReference>
<dbReference type="InterPro" id="IPR022907">
    <property type="entry name" value="VapC_family"/>
</dbReference>
<dbReference type="PANTHER" id="PTHR33653">
    <property type="entry name" value="RIBONUCLEASE VAPC2"/>
    <property type="match status" value="1"/>
</dbReference>
<dbReference type="PANTHER" id="PTHR33653:SF1">
    <property type="entry name" value="RIBONUCLEASE VAPC2"/>
    <property type="match status" value="1"/>
</dbReference>
<dbReference type="Pfam" id="PF01850">
    <property type="entry name" value="PIN"/>
    <property type="match status" value="1"/>
</dbReference>
<dbReference type="SUPFAM" id="SSF88723">
    <property type="entry name" value="PIN domain-like"/>
    <property type="match status" value="1"/>
</dbReference>
<accession>P95007</accession>
<accession>L0TA40</accession>